<name>AT8A2_MOUSE</name>
<protein>
    <recommendedName>
        <fullName evidence="11">Phospholipid-transporting ATPase IB</fullName>
        <ecNumber evidence="1">7.6.2.1</ecNumber>
    </recommendedName>
    <alternativeName>
        <fullName>ATPase class I type 8A member 2</fullName>
    </alternativeName>
    <alternativeName>
        <fullName>P4-ATPase flippase complex alpha subunit ATP8A2</fullName>
    </alternativeName>
</protein>
<evidence type="ECO:0000250" key="1">
    <source>
        <dbReference type="UniProtKB" id="C7EXK4"/>
    </source>
</evidence>
<evidence type="ECO:0000250" key="2">
    <source>
        <dbReference type="UniProtKB" id="P04191"/>
    </source>
</evidence>
<evidence type="ECO:0000250" key="3">
    <source>
        <dbReference type="UniProtKB" id="Q8NB49"/>
    </source>
</evidence>
<evidence type="ECO:0000250" key="4">
    <source>
        <dbReference type="UniProtKB" id="Q9NTI2"/>
    </source>
</evidence>
<evidence type="ECO:0000250" key="5">
    <source>
        <dbReference type="UniProtKB" id="Q9Y2Q0"/>
    </source>
</evidence>
<evidence type="ECO:0000255" key="6"/>
<evidence type="ECO:0000269" key="7">
    <source>
    </source>
</evidence>
<evidence type="ECO:0000269" key="8">
    <source>
    </source>
</evidence>
<evidence type="ECO:0000269" key="9">
    <source>
    </source>
</evidence>
<evidence type="ECO:0000269" key="10">
    <source>
    </source>
</evidence>
<evidence type="ECO:0000305" key="11"/>
<evidence type="ECO:0000305" key="12">
    <source>
    </source>
</evidence>
<evidence type="ECO:0000312" key="13">
    <source>
        <dbReference type="MGI" id="MGI:1354710"/>
    </source>
</evidence>
<evidence type="ECO:0007744" key="14">
    <source>
    </source>
</evidence>
<feature type="chain" id="PRO_0000046363" description="Phospholipid-transporting ATPase IB">
    <location>
        <begin position="1"/>
        <end position="1148"/>
    </location>
</feature>
<feature type="topological domain" description="Cytoplasmic" evidence="6">
    <location>
        <begin position="1"/>
        <end position="44"/>
    </location>
</feature>
<feature type="transmembrane region" description="Helical" evidence="6">
    <location>
        <begin position="45"/>
        <end position="66"/>
    </location>
</feature>
<feature type="topological domain" description="Exoplasmic loop" evidence="6">
    <location>
        <begin position="67"/>
        <end position="71"/>
    </location>
</feature>
<feature type="transmembrane region" description="Helical" evidence="6">
    <location>
        <begin position="72"/>
        <end position="94"/>
    </location>
</feature>
<feature type="topological domain" description="Cytoplasmic" evidence="6">
    <location>
        <begin position="95"/>
        <end position="276"/>
    </location>
</feature>
<feature type="transmembrane region" description="Helical" evidence="6">
    <location>
        <begin position="277"/>
        <end position="298"/>
    </location>
</feature>
<feature type="topological domain" description="Exoplasmic loop" evidence="6">
    <location>
        <begin position="299"/>
        <end position="323"/>
    </location>
</feature>
<feature type="transmembrane region" description="Helical" evidence="6">
    <location>
        <begin position="324"/>
        <end position="345"/>
    </location>
</feature>
<feature type="topological domain" description="Cytoplasmic" evidence="6">
    <location>
        <begin position="346"/>
        <end position="837"/>
    </location>
</feature>
<feature type="transmembrane region" description="Helical" evidence="6">
    <location>
        <begin position="838"/>
        <end position="858"/>
    </location>
</feature>
<feature type="topological domain" description="Exoplasmic loop" evidence="6">
    <location>
        <begin position="859"/>
        <end position="870"/>
    </location>
</feature>
<feature type="transmembrane region" description="Helical" evidence="6">
    <location>
        <begin position="871"/>
        <end position="890"/>
    </location>
</feature>
<feature type="topological domain" description="Cytoplasmic" evidence="6">
    <location>
        <begin position="891"/>
        <end position="920"/>
    </location>
</feature>
<feature type="transmembrane region" description="Helical" evidence="6">
    <location>
        <begin position="921"/>
        <end position="942"/>
    </location>
</feature>
<feature type="topological domain" description="Exoplasmic loop" evidence="6">
    <location>
        <begin position="943"/>
        <end position="956"/>
    </location>
</feature>
<feature type="transmembrane region" description="Helical" evidence="6">
    <location>
        <begin position="957"/>
        <end position="979"/>
    </location>
</feature>
<feature type="topological domain" description="Cytoplasmic" evidence="6">
    <location>
        <begin position="980"/>
        <end position="985"/>
    </location>
</feature>
<feature type="transmembrane region" description="Helical" evidence="6">
    <location>
        <begin position="986"/>
        <end position="1006"/>
    </location>
</feature>
<feature type="topological domain" description="Exoplasmic loop" evidence="6">
    <location>
        <begin position="1007"/>
        <end position="1024"/>
    </location>
</feature>
<feature type="transmembrane region" description="Helical" evidence="6">
    <location>
        <begin position="1025"/>
        <end position="1049"/>
    </location>
</feature>
<feature type="topological domain" description="Cytoplasmic" evidence="6">
    <location>
        <begin position="1050"/>
        <end position="1148"/>
    </location>
</feature>
<feature type="active site" description="4-aspartylphosphate intermediate" evidence="5">
    <location>
        <position position="388"/>
    </location>
</feature>
<feature type="binding site" evidence="5">
    <location>
        <position position="388"/>
    </location>
    <ligand>
        <name>ATP</name>
        <dbReference type="ChEBI" id="CHEBI:30616"/>
    </ligand>
</feature>
<feature type="binding site" evidence="5">
    <location>
        <position position="388"/>
    </location>
    <ligand>
        <name>Mg(2+)</name>
        <dbReference type="ChEBI" id="CHEBI:18420"/>
    </ligand>
</feature>
<feature type="binding site" evidence="5">
    <location>
        <position position="389"/>
    </location>
    <ligand>
        <name>ATP</name>
        <dbReference type="ChEBI" id="CHEBI:30616"/>
    </ligand>
</feature>
<feature type="binding site" evidence="2">
    <location>
        <position position="390"/>
    </location>
    <ligand>
        <name>ATP</name>
        <dbReference type="ChEBI" id="CHEBI:30616"/>
    </ligand>
</feature>
<feature type="binding site" evidence="5">
    <location>
        <position position="390"/>
    </location>
    <ligand>
        <name>Mg(2+)</name>
        <dbReference type="ChEBI" id="CHEBI:18420"/>
    </ligand>
</feature>
<feature type="binding site" evidence="2">
    <location>
        <position position="488"/>
    </location>
    <ligand>
        <name>ATP</name>
        <dbReference type="ChEBI" id="CHEBI:30616"/>
    </ligand>
</feature>
<feature type="binding site" evidence="5">
    <location>
        <position position="529"/>
    </location>
    <ligand>
        <name>ATP</name>
        <dbReference type="ChEBI" id="CHEBI:30616"/>
    </ligand>
</feature>
<feature type="binding site" evidence="2">
    <location>
        <position position="552"/>
    </location>
    <ligand>
        <name>ATP</name>
        <dbReference type="ChEBI" id="CHEBI:30616"/>
    </ligand>
</feature>
<feature type="binding site" evidence="2">
    <location>
        <position position="585"/>
    </location>
    <ligand>
        <name>ATP</name>
        <dbReference type="ChEBI" id="CHEBI:30616"/>
    </ligand>
</feature>
<feature type="binding site" evidence="2">
    <location>
        <position position="665"/>
    </location>
    <ligand>
        <name>ATP</name>
        <dbReference type="ChEBI" id="CHEBI:30616"/>
    </ligand>
</feature>
<feature type="binding site" evidence="2">
    <location>
        <position position="666"/>
    </location>
    <ligand>
        <name>ATP</name>
        <dbReference type="ChEBI" id="CHEBI:30616"/>
    </ligand>
</feature>
<feature type="binding site" evidence="2">
    <location>
        <position position="667"/>
    </location>
    <ligand>
        <name>ATP</name>
        <dbReference type="ChEBI" id="CHEBI:30616"/>
    </ligand>
</feature>
<feature type="binding site" evidence="2">
    <location>
        <position position="755"/>
    </location>
    <ligand>
        <name>ATP</name>
        <dbReference type="ChEBI" id="CHEBI:30616"/>
    </ligand>
</feature>
<feature type="binding site" evidence="2">
    <location>
        <position position="761"/>
    </location>
    <ligand>
        <name>ATP</name>
        <dbReference type="ChEBI" id="CHEBI:30616"/>
    </ligand>
</feature>
<feature type="binding site" evidence="5">
    <location>
        <position position="781"/>
    </location>
    <ligand>
        <name>Mg(2+)</name>
        <dbReference type="ChEBI" id="CHEBI:18420"/>
    </ligand>
</feature>
<feature type="binding site" evidence="5">
    <location>
        <position position="784"/>
    </location>
    <ligand>
        <name>ATP</name>
        <dbReference type="ChEBI" id="CHEBI:30616"/>
    </ligand>
</feature>
<feature type="binding site" evidence="5">
    <location>
        <position position="785"/>
    </location>
    <ligand>
        <name>ATP</name>
        <dbReference type="ChEBI" id="CHEBI:30616"/>
    </ligand>
</feature>
<feature type="binding site" evidence="3">
    <location>
        <position position="785"/>
    </location>
    <ligand>
        <name>Mg(2+)</name>
        <dbReference type="ChEBI" id="CHEBI:18420"/>
    </ligand>
</feature>
<feature type="site" description="Involved in the recognition of the lipid substrate on the exoplasmic side" evidence="1">
    <location>
        <position position="331"/>
    </location>
</feature>
<feature type="site" description="Involved in the release of the transported lipid into the cytosolic leaflet" evidence="1">
    <location>
        <position position="336"/>
    </location>
</feature>
<feature type="modified residue" description="Phosphothreonine" evidence="14">
    <location>
        <position position="5"/>
    </location>
</feature>
<feature type="sequence variant" description="In wl; abolishes phosphatidylserine translocase activity." evidence="9">
    <location>
        <begin position="637"/>
        <end position="643"/>
    </location>
</feature>
<feature type="mutagenesis site" description="Abolishes phosphatidylserine translocase activity, abolishes effect on neurite outgrowth." evidence="8 9">
    <original>D</original>
    <variation>A</variation>
    <location>
        <position position="388"/>
    </location>
</feature>
<accession>P98200</accession>
<accession>B2RQF2</accession>
<gene>
    <name evidence="13" type="primary">Atp8a2</name>
</gene>
<proteinExistence type="evidence at protein level"/>
<comment type="function">
    <text evidence="1 4 8 9 10">Catalytic component of a P4-ATPase flippase complex which catalyzes the hydrolysis of ATP coupled to the transport of aminophospholipids from the outer to the inner leaflet of various membranes and ensures the maintenance of asymmetric distribution of phospholipids (PubMed:22912588). Able to translocate phosphatidylserine, but not phosphatidylcholine (By similarity). Phospholipid translocation also seems to be implicated in vesicle formation and in uptake of lipid signaling molecules. Reconstituted to liposomes, the ATP8A2:TMEM30A flippase complex predominantly transports phosphatidylserine (PS) and to a lesser extent phosphatidylethanolamine (PE) (PubMed:22912588). Phospholipid translocation is not associated with a countertransport of an inorganic ion or other charged substrate from the cytoplasmic side toward the exoplasm in connection with the phosphorylation from ATP (By similarity). ATP8A2:TMEM30A may be involved in regulation of neurite outgrowth (PubMed:22641037). Proposed to function in the generation and maintenance of phospholipid asymmetry in photoreceptor disk membranes and neuronal axon membranes. May be involved in vesicle trafficking in neuronal cells. Required for normal visual and auditory function; involved in photoreceptor and inner ear spiral ganglion cell survival (PubMed:24413176).</text>
</comment>
<comment type="catalytic activity">
    <reaction evidence="1">
        <text>ATP + H2O + phospholipidSide 1 = ADP + phosphate + phospholipidSide 2.</text>
        <dbReference type="EC" id="7.6.2.1"/>
    </reaction>
</comment>
<comment type="catalytic activity">
    <reaction evidence="1">
        <text>a 1,2-diacyl-sn-glycero-3-phospho-L-serine(out) + ATP + H2O = a 1,2-diacyl-sn-glycero-3-phospho-L-serine(in) + ADP + phosphate + H(+)</text>
        <dbReference type="Rhea" id="RHEA:38567"/>
        <dbReference type="ChEBI" id="CHEBI:15377"/>
        <dbReference type="ChEBI" id="CHEBI:15378"/>
        <dbReference type="ChEBI" id="CHEBI:30616"/>
        <dbReference type="ChEBI" id="CHEBI:43474"/>
        <dbReference type="ChEBI" id="CHEBI:57262"/>
        <dbReference type="ChEBI" id="CHEBI:456216"/>
    </reaction>
    <physiologicalReaction direction="left-to-right" evidence="1">
        <dbReference type="Rhea" id="RHEA:38568"/>
    </physiologicalReaction>
</comment>
<comment type="catalytic activity">
    <reaction evidence="1">
        <text>a 1,2-diacyl-sn-glycero-3-phosphoethanolamine(in) + ATP + H2O = a 1,2-diacyl-sn-glycero-3-phosphoethanolamine(out) + ADP + phosphate + H(+)</text>
        <dbReference type="Rhea" id="RHEA:36439"/>
        <dbReference type="ChEBI" id="CHEBI:15377"/>
        <dbReference type="ChEBI" id="CHEBI:15378"/>
        <dbReference type="ChEBI" id="CHEBI:30616"/>
        <dbReference type="ChEBI" id="CHEBI:43474"/>
        <dbReference type="ChEBI" id="CHEBI:64612"/>
        <dbReference type="ChEBI" id="CHEBI:456216"/>
    </reaction>
    <physiologicalReaction direction="left-to-right" evidence="1">
        <dbReference type="Rhea" id="RHEA:36440"/>
    </physiologicalReaction>
</comment>
<comment type="cofactor">
    <cofactor evidence="5">
        <name>Mg(2+)</name>
        <dbReference type="ChEBI" id="CHEBI:18420"/>
    </cofactor>
</comment>
<comment type="subunit">
    <text evidence="1">Component of a P4-ATPase flippase complex which consists of a catalytic alpha subunit and an accessory beta subunit. Interacts with TMEM30A to form a flippase complex.</text>
</comment>
<comment type="subcellular location">
    <subcellularLocation>
        <location evidence="12">Membrane</location>
        <topology evidence="6">Multi-pass membrane protein</topology>
    </subcellularLocation>
    <subcellularLocation>
        <location evidence="10">Golgi apparatus membrane</location>
    </subcellularLocation>
    <subcellularLocation>
        <location evidence="10">Endosome membrane</location>
    </subcellularLocation>
    <subcellularLocation>
        <location evidence="10">Cell membrane</location>
    </subcellularLocation>
    <subcellularLocation>
        <location evidence="10">Photoreceptor outer segment membrane</location>
    </subcellularLocation>
    <subcellularLocation>
        <location evidence="1">Photoreceptor inner segment membrane</location>
    </subcellularLocation>
    <text evidence="1 10">Localizes to the Golgi and endosomes in photoreceptor cells (PubMed:24413176). Localizes to disk membranes of rod photoreceptor outer segments (ROS) (By similarity).</text>
</comment>
<comment type="tissue specificity">
    <text evidence="7 9">Found in testis, heart and brain. Most abundant in testis. Also detected in fetal tissues. Expressed in retinal photoreceptor cells; detected in retina outer nuclear layer and inner segment (at protein level).</text>
</comment>
<comment type="disease">
    <text evidence="9">Defects in Atp8a2 are the cause of Wabbler-lethal (wl) phenotype. Homozygotes show severe neurological annormalities that include ataxia and body tremors linked to progressive axonal degeneration in several areas of the nervous system.</text>
</comment>
<comment type="disruption phenotype">
    <text evidence="9">Atp8a2 and Atp8a1 double mutant mice die soon after birth.</text>
</comment>
<comment type="similarity">
    <text evidence="11">Belongs to the cation transport ATPase (P-type) (TC 3.A.3) family. Type IV subfamily.</text>
</comment>
<organism>
    <name type="scientific">Mus musculus</name>
    <name type="common">Mouse</name>
    <dbReference type="NCBI Taxonomy" id="10090"/>
    <lineage>
        <taxon>Eukaryota</taxon>
        <taxon>Metazoa</taxon>
        <taxon>Chordata</taxon>
        <taxon>Craniata</taxon>
        <taxon>Vertebrata</taxon>
        <taxon>Euteleostomi</taxon>
        <taxon>Mammalia</taxon>
        <taxon>Eutheria</taxon>
        <taxon>Euarchontoglires</taxon>
        <taxon>Glires</taxon>
        <taxon>Rodentia</taxon>
        <taxon>Myomorpha</taxon>
        <taxon>Muroidea</taxon>
        <taxon>Muridae</taxon>
        <taxon>Murinae</taxon>
        <taxon>Mus</taxon>
        <taxon>Mus</taxon>
    </lineage>
</organism>
<reference key="1">
    <citation type="journal article" date="1999" name="Physiol. Genomics">
        <title>Differential expression of putative transbilayer amphipath transporters.</title>
        <authorList>
            <person name="Halleck M.S."/>
            <person name="Lawler J.F. Jr."/>
            <person name="Blackshaw S."/>
            <person name="Gao L."/>
            <person name="Nagarajan P."/>
            <person name="Hacker C."/>
            <person name="Pyle S."/>
            <person name="Newman J.T."/>
            <person name="Nakanishi Y."/>
            <person name="Ando H."/>
            <person name="Weinstock D."/>
            <person name="Williamson P.L."/>
            <person name="Schlegel R.A."/>
        </authorList>
    </citation>
    <scope>NUCLEOTIDE SEQUENCE [MRNA]</scope>
    <source>
        <strain>ICR</strain>
    </source>
</reference>
<reference key="2">
    <citation type="journal article" date="2004" name="Genome Res.">
        <title>The status, quality, and expansion of the NIH full-length cDNA project: the Mammalian Gene Collection (MGC).</title>
        <authorList>
            <consortium name="The MGC Project Team"/>
        </authorList>
    </citation>
    <scope>NUCLEOTIDE SEQUENCE [LARGE SCALE MRNA]</scope>
    <source>
        <tissue>Brain</tissue>
    </source>
</reference>
<reference key="3">
    <citation type="journal article" date="2009" name="J. Biol. Chem.">
        <title>Localization, purification, and functional reconstitution of the P4-ATPase Atp8a2, a phosphatidylserine flippase in photoreceptor disc membranes.</title>
        <authorList>
            <person name="Coleman J.A."/>
            <person name="Kwok M.C."/>
            <person name="Molday R.S."/>
        </authorList>
    </citation>
    <scope>TISSUE SPECIFICITY</scope>
</reference>
<reference key="4">
    <citation type="journal article" date="2010" name="Cell">
        <title>A tissue-specific atlas of mouse protein phosphorylation and expression.</title>
        <authorList>
            <person name="Huttlin E.L."/>
            <person name="Jedrychowski M.P."/>
            <person name="Elias J.E."/>
            <person name="Goswami T."/>
            <person name="Rad R."/>
            <person name="Beausoleil S.A."/>
            <person name="Villen J."/>
            <person name="Haas W."/>
            <person name="Sowa M.E."/>
            <person name="Gygi S.P."/>
        </authorList>
    </citation>
    <scope>PHOSPHORYLATION [LARGE SCALE ANALYSIS] AT THR-5</scope>
    <scope>IDENTIFICATION BY MASS SPECTROMETRY [LARGE SCALE ANALYSIS]</scope>
    <source>
        <tissue>Brain</tissue>
    </source>
</reference>
<reference key="5">
    <citation type="journal article" date="2012" name="FEBS Lett.">
        <title>P4-ATPase ATP8A2 acts in synergy with CDC50A to enhance neurite outgrowth.</title>
        <authorList>
            <person name="Xu Q."/>
            <person name="Yang G.Y."/>
            <person name="Liu N."/>
            <person name="Xu P."/>
            <person name="Chen Y.L."/>
            <person name="Zhou Z."/>
            <person name="Luo Z.G."/>
            <person name="Ding X."/>
        </authorList>
    </citation>
    <scope>FUNCTION</scope>
    <scope>MUTAGENESIS OF ASP-388</scope>
</reference>
<reference key="6">
    <citation type="journal article" date="2012" name="PLoS Genet.">
        <title>Mutations in a P-type ATPase gene cause axonal degeneration.</title>
        <authorList>
            <person name="Zhu X."/>
            <person name="Libby R.T."/>
            <person name="de Vries W.N."/>
            <person name="Smith R.S."/>
            <person name="Wright D.L."/>
            <person name="Bronson R.T."/>
            <person name="Seburn K.L."/>
            <person name="John S.W."/>
        </authorList>
    </citation>
    <scope>FUNCTION</scope>
    <scope>TISSUE SPECIFICITY</scope>
    <scope>DISRUPTION PHENOTYPE</scope>
    <scope>INVOLVEMENT IN WL</scope>
    <scope>VARIANT WL 637-THR--LEU-643 DEL</scope>
    <scope>MUTAGENESIS OF ASP-388</scope>
</reference>
<reference key="7">
    <citation type="journal article" date="2014" name="J. Cell Sci.">
        <title>Phospholipid flippase ATP8A2 is required for normal visual and auditory function and photoreceptor and spiral ganglion cell survival.</title>
        <authorList>
            <person name="Coleman J.A."/>
            <person name="Zhu X."/>
            <person name="Djajadi H.R."/>
            <person name="Molday L.L."/>
            <person name="Smith R.S."/>
            <person name="Libby R.T."/>
            <person name="John S.W."/>
            <person name="Molday R.S."/>
        </authorList>
    </citation>
    <scope>FUNCTION</scope>
    <scope>SUBCELLULAR LOCATION</scope>
</reference>
<sequence length="1148" mass="129417">MSRATSVGDQLEAPARIIYLNQSHLNKFCDNRISTAKYSVLTFLPRFLYEQIRRAANAFFLFIALLQQIPDVSPTGRYTTLVPLVIILTIAGIKEIIEDFKRHKADNAVNKKKTIVLRNGMWHTIMWKEVAVGDIVKVLNGQYLPADMVLFSSSEPQGMCYVETANLDGETNLKIRQGLSHTTDMQTRDVLMKLSGRIECEGPNRHLYDFTGNLHLDGKSSVALGPDQILLRGTQLRNTQWVFGVVVYTGHDSKLMQNSTKAPLKRSNVEKVTNVQILVLFGILLVMALVSSVGALFWNGSHGGKSWYIKKMDTNSDNFGYNLLTFIILYNNLIPISLLVTLEVVKYTQALFINWDMDMYYIENDTPAMARTSNLNEELGQVKYLFSDKTGTLTCNIMNFKKCSIAGVTYGHFPELAREQSSDDFCRMTSCTNDSCDFNDPRLLKNIEDQHPTAPCIQEFLTLLAVCHTVVPEKDGDEIIYQASSPDEAALVKGAKKLGFVFTGRTPYSVIIEAMGQEQTFGILNVLEFSSDRKRMSVIVRLPSGQLRLYCKGADNVIFERLSKDSKYMEETLCHLEYFATEGLRTLCVAYADLSENEYEEWLKVYQEASIILKDRAQRLEECYEIIEKNLLLLGATAIEDRLQAGVPETIATLLKAEIKIWVLTGDKQETAINIGYSCRLVSQNMALILLKEDSLDATRAAITQHCTDLGNLLGKENDVALIIDGHTLKYALSFEVRRSFLDLALSCKAVICCRVSPLQKSEIVDVVKKRVKAITLAIGDGANDVGMIQTAHVGVGISGNEGMQATNNSDYAIAQFSYLEKLLLVHGAWSYNRVTKCILYCFYKNVVLYIIELWFAFVNGFSGQILFERWCIGLYNVIFTALPPFTLGIFERSCTQESMLRFPQLYRITQNAEGFNTKVFWGHCINALVHSLILFWVPMKALEHDTPVTSGHATDYLFVGNIVYTYVVVTVCLKAGLETTAWTKFSHLAVWGSMLIWLVFFGVYSTIWPTIPIAPDMKGQATMVLSSAYFWLGLFLVPTACLIEDVAWRAAKHTCKKTLLEEVQELETKSRVMGKAMLRDSNGKRMNERDRLIKRLSRKTPPTLFRTGSIQQCVSHGYAFSQEEHGAVTQEEIVRAYDTTKENSRKK</sequence>
<keyword id="KW-0067">ATP-binding</keyword>
<keyword id="KW-1003">Cell membrane</keyword>
<keyword id="KW-0966">Cell projection</keyword>
<keyword id="KW-0225">Disease variant</keyword>
<keyword id="KW-0967">Endosome</keyword>
<keyword id="KW-0333">Golgi apparatus</keyword>
<keyword id="KW-0445">Lipid transport</keyword>
<keyword id="KW-0460">Magnesium</keyword>
<keyword id="KW-0472">Membrane</keyword>
<keyword id="KW-0479">Metal-binding</keyword>
<keyword id="KW-0547">Nucleotide-binding</keyword>
<keyword id="KW-0597">Phosphoprotein</keyword>
<keyword id="KW-1185">Reference proteome</keyword>
<keyword id="KW-1278">Translocase</keyword>
<keyword id="KW-0812">Transmembrane</keyword>
<keyword id="KW-1133">Transmembrane helix</keyword>
<keyword id="KW-0813">Transport</keyword>
<dbReference type="EC" id="7.6.2.1" evidence="1"/>
<dbReference type="EMBL" id="AF156550">
    <property type="protein sequence ID" value="AAF09448.1"/>
    <property type="molecule type" value="mRNA"/>
</dbReference>
<dbReference type="EMBL" id="BC137896">
    <property type="protein sequence ID" value="AAI37897.1"/>
    <property type="molecule type" value="mRNA"/>
</dbReference>
<dbReference type="CCDS" id="CCDS27174.1"/>
<dbReference type="RefSeq" id="NP_056618.1">
    <property type="nucleotide sequence ID" value="NM_015803.3"/>
</dbReference>
<dbReference type="RefSeq" id="XP_006519297.1">
    <property type="nucleotide sequence ID" value="XM_006519234.3"/>
</dbReference>
<dbReference type="RefSeq" id="XP_006519298.1">
    <property type="nucleotide sequence ID" value="XM_006519235.3"/>
</dbReference>
<dbReference type="SMR" id="P98200"/>
<dbReference type="BioGRID" id="206101">
    <property type="interactions" value="2"/>
</dbReference>
<dbReference type="FunCoup" id="P98200">
    <property type="interactions" value="862"/>
</dbReference>
<dbReference type="STRING" id="10090.ENSMUSP00000079238"/>
<dbReference type="TCDB" id="3.A.3.8.8">
    <property type="family name" value="the p-type atpase (p-atpase) superfamily"/>
</dbReference>
<dbReference type="GlyGen" id="P98200">
    <property type="glycosylation" value="3 sites, 3 N-linked glycans (3 sites)"/>
</dbReference>
<dbReference type="iPTMnet" id="P98200"/>
<dbReference type="PaxDb" id="10090-ENSMUSP00000079238"/>
<dbReference type="PeptideAtlas" id="P98200"/>
<dbReference type="ProteomicsDB" id="277086"/>
<dbReference type="Antibodypedia" id="50027">
    <property type="antibodies" value="91 antibodies from 15 providers"/>
</dbReference>
<dbReference type="DNASU" id="50769"/>
<dbReference type="Ensembl" id="ENSMUST00000080368.13">
    <property type="protein sequence ID" value="ENSMUSP00000079238.6"/>
    <property type="gene ID" value="ENSMUSG00000021983.17"/>
</dbReference>
<dbReference type="GeneID" id="50769"/>
<dbReference type="KEGG" id="mmu:50769"/>
<dbReference type="UCSC" id="uc007uet.1">
    <property type="organism name" value="mouse"/>
</dbReference>
<dbReference type="AGR" id="MGI:1354710"/>
<dbReference type="CTD" id="51761"/>
<dbReference type="MGI" id="MGI:1354710">
    <property type="gene designation" value="Atp8a2"/>
</dbReference>
<dbReference type="VEuPathDB" id="HostDB:ENSMUSG00000021983"/>
<dbReference type="eggNOG" id="KOG0206">
    <property type="taxonomic scope" value="Eukaryota"/>
</dbReference>
<dbReference type="GeneTree" id="ENSGT00940000157332"/>
<dbReference type="HOGENOM" id="CLU_000846_3_0_1"/>
<dbReference type="InParanoid" id="P98200"/>
<dbReference type="OMA" id="KHTYKKT"/>
<dbReference type="OrthoDB" id="377733at2759"/>
<dbReference type="PhylomeDB" id="P98200"/>
<dbReference type="TreeFam" id="TF300654"/>
<dbReference type="BRENDA" id="7.6.2.1">
    <property type="organism ID" value="3474"/>
</dbReference>
<dbReference type="Reactome" id="R-MMU-936837">
    <property type="pathway name" value="Ion transport by P-type ATPases"/>
</dbReference>
<dbReference type="BioGRID-ORCS" id="50769">
    <property type="hits" value="3 hits in 82 CRISPR screens"/>
</dbReference>
<dbReference type="ChiTaRS" id="Atp8a2">
    <property type="organism name" value="mouse"/>
</dbReference>
<dbReference type="PRO" id="PR:P98200"/>
<dbReference type="Proteomes" id="UP000000589">
    <property type="component" value="Chromosome 14"/>
</dbReference>
<dbReference type="RNAct" id="P98200">
    <property type="molecule type" value="protein"/>
</dbReference>
<dbReference type="Bgee" id="ENSMUSG00000021983">
    <property type="expression patterns" value="Expressed in lumbar dorsal root ganglion and 167 other cell types or tissues"/>
</dbReference>
<dbReference type="ExpressionAtlas" id="P98200">
    <property type="expression patterns" value="baseline and differential"/>
</dbReference>
<dbReference type="GO" id="GO:0042995">
    <property type="term" value="C:cell projection"/>
    <property type="evidence" value="ECO:0007669"/>
    <property type="project" value="UniProtKB-KW"/>
</dbReference>
<dbReference type="GO" id="GO:0005768">
    <property type="term" value="C:endosome"/>
    <property type="evidence" value="ECO:0000314"/>
    <property type="project" value="UniProtKB"/>
</dbReference>
<dbReference type="GO" id="GO:0010008">
    <property type="term" value="C:endosome membrane"/>
    <property type="evidence" value="ECO:0007669"/>
    <property type="project" value="UniProtKB-SubCell"/>
</dbReference>
<dbReference type="GO" id="GO:0005794">
    <property type="term" value="C:Golgi apparatus"/>
    <property type="evidence" value="ECO:0000314"/>
    <property type="project" value="UniProtKB"/>
</dbReference>
<dbReference type="GO" id="GO:0000139">
    <property type="term" value="C:Golgi membrane"/>
    <property type="evidence" value="ECO:0007669"/>
    <property type="project" value="UniProtKB-SubCell"/>
</dbReference>
<dbReference type="GO" id="GO:0016020">
    <property type="term" value="C:membrane"/>
    <property type="evidence" value="ECO:0000314"/>
    <property type="project" value="UniProtKB"/>
</dbReference>
<dbReference type="GO" id="GO:0005654">
    <property type="term" value="C:nucleoplasm"/>
    <property type="evidence" value="ECO:0007669"/>
    <property type="project" value="Ensembl"/>
</dbReference>
<dbReference type="GO" id="GO:1990531">
    <property type="term" value="C:phospholipid-translocating ATPase complex"/>
    <property type="evidence" value="ECO:0007669"/>
    <property type="project" value="Ensembl"/>
</dbReference>
<dbReference type="GO" id="GO:0005886">
    <property type="term" value="C:plasma membrane"/>
    <property type="evidence" value="ECO:0007669"/>
    <property type="project" value="UniProtKB-SubCell"/>
</dbReference>
<dbReference type="GO" id="GO:0015247">
    <property type="term" value="F:aminophospholipid flippase activity"/>
    <property type="evidence" value="ECO:0000315"/>
    <property type="project" value="GO_Central"/>
</dbReference>
<dbReference type="GO" id="GO:0005524">
    <property type="term" value="F:ATP binding"/>
    <property type="evidence" value="ECO:0007669"/>
    <property type="project" value="UniProtKB-KW"/>
</dbReference>
<dbReference type="GO" id="GO:0016887">
    <property type="term" value="F:ATP hydrolysis activity"/>
    <property type="evidence" value="ECO:0007669"/>
    <property type="project" value="InterPro"/>
</dbReference>
<dbReference type="GO" id="GO:0000287">
    <property type="term" value="F:magnesium ion binding"/>
    <property type="evidence" value="ECO:0007669"/>
    <property type="project" value="InterPro"/>
</dbReference>
<dbReference type="GO" id="GO:0090555">
    <property type="term" value="F:phosphatidylethanolamine flippase activity"/>
    <property type="evidence" value="ECO:0000250"/>
    <property type="project" value="UniProtKB"/>
</dbReference>
<dbReference type="GO" id="GO:0140346">
    <property type="term" value="F:phosphatidylserine flippase activity"/>
    <property type="evidence" value="ECO:0000250"/>
    <property type="project" value="UniProtKB"/>
</dbReference>
<dbReference type="GO" id="GO:0090556">
    <property type="term" value="F:phosphatidylserine floppase activity"/>
    <property type="evidence" value="ECO:0007669"/>
    <property type="project" value="RHEA"/>
</dbReference>
<dbReference type="GO" id="GO:0140331">
    <property type="term" value="P:aminophospholipid translocation"/>
    <property type="evidence" value="ECO:0000250"/>
    <property type="project" value="UniProtKB"/>
</dbReference>
<dbReference type="GO" id="GO:0007409">
    <property type="term" value="P:axonogenesis"/>
    <property type="evidence" value="ECO:0000315"/>
    <property type="project" value="MGI"/>
</dbReference>
<dbReference type="GO" id="GO:0050908">
    <property type="term" value="P:detection of light stimulus involved in visual perception"/>
    <property type="evidence" value="ECO:0000315"/>
    <property type="project" value="UniProtKB"/>
</dbReference>
<dbReference type="GO" id="GO:0008340">
    <property type="term" value="P:determination of adult lifespan"/>
    <property type="evidence" value="ECO:0000315"/>
    <property type="project" value="MGI"/>
</dbReference>
<dbReference type="GO" id="GO:0042755">
    <property type="term" value="P:eating behavior"/>
    <property type="evidence" value="ECO:0000315"/>
    <property type="project" value="MGI"/>
</dbReference>
<dbReference type="GO" id="GO:0042472">
    <property type="term" value="P:inner ear morphogenesis"/>
    <property type="evidence" value="ECO:0000315"/>
    <property type="project" value="UniProtKB"/>
</dbReference>
<dbReference type="GO" id="GO:0003011">
    <property type="term" value="P:involuntary skeletal muscle contraction"/>
    <property type="evidence" value="ECO:0000315"/>
    <property type="project" value="MGI"/>
</dbReference>
<dbReference type="GO" id="GO:0060052">
    <property type="term" value="P:neurofilament cytoskeleton organization"/>
    <property type="evidence" value="ECO:0000315"/>
    <property type="project" value="UniProtKB"/>
</dbReference>
<dbReference type="GO" id="GO:0050884">
    <property type="term" value="P:neuromuscular process controlling posture"/>
    <property type="evidence" value="ECO:0000315"/>
    <property type="project" value="MGI"/>
</dbReference>
<dbReference type="GO" id="GO:0048666">
    <property type="term" value="P:neuron development"/>
    <property type="evidence" value="ECO:0000315"/>
    <property type="project" value="MGI"/>
</dbReference>
<dbReference type="GO" id="GO:0031175">
    <property type="term" value="P:neuron projection development"/>
    <property type="evidence" value="ECO:0000266"/>
    <property type="project" value="MGI"/>
</dbReference>
<dbReference type="GO" id="GO:0040018">
    <property type="term" value="P:positive regulation of multicellular organism growth"/>
    <property type="evidence" value="ECO:0000315"/>
    <property type="project" value="MGI"/>
</dbReference>
<dbReference type="GO" id="GO:0010976">
    <property type="term" value="P:positive regulation of neuron projection development"/>
    <property type="evidence" value="ECO:0000314"/>
    <property type="project" value="UniProtKB"/>
</dbReference>
<dbReference type="GO" id="GO:0061092">
    <property type="term" value="P:positive regulation of phospholipid translocation"/>
    <property type="evidence" value="ECO:0000314"/>
    <property type="project" value="UniProtKB"/>
</dbReference>
<dbReference type="GO" id="GO:0010996">
    <property type="term" value="P:response to auditory stimulus"/>
    <property type="evidence" value="ECO:0000315"/>
    <property type="project" value="UniProtKB"/>
</dbReference>
<dbReference type="GO" id="GO:0010842">
    <property type="term" value="P:retina layer formation"/>
    <property type="evidence" value="ECO:0000315"/>
    <property type="project" value="UniProtKB"/>
</dbReference>
<dbReference type="GO" id="GO:0043588">
    <property type="term" value="P:skin development"/>
    <property type="evidence" value="ECO:0000315"/>
    <property type="project" value="MGI"/>
</dbReference>
<dbReference type="CDD" id="cd02073">
    <property type="entry name" value="P-type_ATPase_APLT_Dnf-like"/>
    <property type="match status" value="1"/>
</dbReference>
<dbReference type="FunFam" id="2.70.150.10:FF:000021">
    <property type="entry name" value="Phospholipid-transporting ATPase"/>
    <property type="match status" value="1"/>
</dbReference>
<dbReference type="FunFam" id="3.40.1110.10:FF:000010">
    <property type="entry name" value="Phospholipid-transporting ATPase"/>
    <property type="match status" value="1"/>
</dbReference>
<dbReference type="FunFam" id="3.40.50.1000:FF:000010">
    <property type="entry name" value="Phospholipid-transporting ATPase"/>
    <property type="match status" value="1"/>
</dbReference>
<dbReference type="Gene3D" id="3.40.1110.10">
    <property type="entry name" value="Calcium-transporting ATPase, cytoplasmic domain N"/>
    <property type="match status" value="1"/>
</dbReference>
<dbReference type="Gene3D" id="2.70.150.10">
    <property type="entry name" value="Calcium-transporting ATPase, cytoplasmic transduction domain A"/>
    <property type="match status" value="1"/>
</dbReference>
<dbReference type="Gene3D" id="3.40.50.1000">
    <property type="entry name" value="HAD superfamily/HAD-like"/>
    <property type="match status" value="1"/>
</dbReference>
<dbReference type="InterPro" id="IPR023299">
    <property type="entry name" value="ATPase_P-typ_cyto_dom_N"/>
</dbReference>
<dbReference type="InterPro" id="IPR018303">
    <property type="entry name" value="ATPase_P-typ_P_site"/>
</dbReference>
<dbReference type="InterPro" id="IPR023298">
    <property type="entry name" value="ATPase_P-typ_TM_dom_sf"/>
</dbReference>
<dbReference type="InterPro" id="IPR008250">
    <property type="entry name" value="ATPase_P-typ_transduc_dom_A_sf"/>
</dbReference>
<dbReference type="InterPro" id="IPR036412">
    <property type="entry name" value="HAD-like_sf"/>
</dbReference>
<dbReference type="InterPro" id="IPR023214">
    <property type="entry name" value="HAD_sf"/>
</dbReference>
<dbReference type="InterPro" id="IPR006539">
    <property type="entry name" value="P-type_ATPase_IV"/>
</dbReference>
<dbReference type="InterPro" id="IPR032631">
    <property type="entry name" value="P-type_ATPase_N"/>
</dbReference>
<dbReference type="InterPro" id="IPR001757">
    <property type="entry name" value="P_typ_ATPase"/>
</dbReference>
<dbReference type="InterPro" id="IPR032630">
    <property type="entry name" value="P_typ_ATPase_c"/>
</dbReference>
<dbReference type="InterPro" id="IPR044492">
    <property type="entry name" value="P_typ_ATPase_HD_dom"/>
</dbReference>
<dbReference type="NCBIfam" id="TIGR01652">
    <property type="entry name" value="ATPase-Plipid"/>
    <property type="match status" value="1"/>
</dbReference>
<dbReference type="NCBIfam" id="TIGR01494">
    <property type="entry name" value="ATPase_P-type"/>
    <property type="match status" value="2"/>
</dbReference>
<dbReference type="PANTHER" id="PTHR24092:SF98">
    <property type="entry name" value="PHOSPHOLIPID-TRANSPORTING ATPASE IB"/>
    <property type="match status" value="1"/>
</dbReference>
<dbReference type="PANTHER" id="PTHR24092">
    <property type="entry name" value="PROBABLE PHOSPHOLIPID-TRANSPORTING ATPASE"/>
    <property type="match status" value="1"/>
</dbReference>
<dbReference type="Pfam" id="PF13246">
    <property type="entry name" value="Cation_ATPase"/>
    <property type="match status" value="1"/>
</dbReference>
<dbReference type="Pfam" id="PF00122">
    <property type="entry name" value="E1-E2_ATPase"/>
    <property type="match status" value="1"/>
</dbReference>
<dbReference type="Pfam" id="PF16212">
    <property type="entry name" value="PhoLip_ATPase_C"/>
    <property type="match status" value="1"/>
</dbReference>
<dbReference type="Pfam" id="PF16209">
    <property type="entry name" value="PhoLip_ATPase_N"/>
    <property type="match status" value="1"/>
</dbReference>
<dbReference type="PRINTS" id="PR00119">
    <property type="entry name" value="CATATPASE"/>
</dbReference>
<dbReference type="SFLD" id="SFLDS00003">
    <property type="entry name" value="Haloacid_Dehalogenase"/>
    <property type="match status" value="1"/>
</dbReference>
<dbReference type="SFLD" id="SFLDF00027">
    <property type="entry name" value="p-type_atpase"/>
    <property type="match status" value="1"/>
</dbReference>
<dbReference type="SUPFAM" id="SSF81653">
    <property type="entry name" value="Calcium ATPase, transduction domain A"/>
    <property type="match status" value="1"/>
</dbReference>
<dbReference type="SUPFAM" id="SSF81665">
    <property type="entry name" value="Calcium ATPase, transmembrane domain M"/>
    <property type="match status" value="1"/>
</dbReference>
<dbReference type="SUPFAM" id="SSF56784">
    <property type="entry name" value="HAD-like"/>
    <property type="match status" value="1"/>
</dbReference>
<dbReference type="SUPFAM" id="SSF81660">
    <property type="entry name" value="Metal cation-transporting ATPase, ATP-binding domain N"/>
    <property type="match status" value="1"/>
</dbReference>
<dbReference type="PROSITE" id="PS00154">
    <property type="entry name" value="ATPASE_E1_E2"/>
    <property type="match status" value="1"/>
</dbReference>